<organism>
    <name type="scientific">Yersinia pseudotuberculosis serotype O:3 (strain YPIII)</name>
    <dbReference type="NCBI Taxonomy" id="502800"/>
    <lineage>
        <taxon>Bacteria</taxon>
        <taxon>Pseudomonadati</taxon>
        <taxon>Pseudomonadota</taxon>
        <taxon>Gammaproteobacteria</taxon>
        <taxon>Enterobacterales</taxon>
        <taxon>Yersiniaceae</taxon>
        <taxon>Yersinia</taxon>
    </lineage>
</organism>
<evidence type="ECO:0000255" key="1">
    <source>
        <dbReference type="HAMAP-Rule" id="MF_00564"/>
    </source>
</evidence>
<keyword id="KW-0548">Nucleotidyltransferase</keyword>
<keyword id="KW-0694">RNA-binding</keyword>
<keyword id="KW-0698">rRNA processing</keyword>
<keyword id="KW-0808">Transferase</keyword>
<keyword id="KW-0819">tRNA processing</keyword>
<keyword id="KW-0820">tRNA-binding</keyword>
<reference key="1">
    <citation type="submission" date="2008-02" db="EMBL/GenBank/DDBJ databases">
        <title>Complete sequence of Yersinia pseudotuberculosis YPIII.</title>
        <authorList>
            <consortium name="US DOE Joint Genome Institute"/>
            <person name="Copeland A."/>
            <person name="Lucas S."/>
            <person name="Lapidus A."/>
            <person name="Glavina del Rio T."/>
            <person name="Dalin E."/>
            <person name="Tice H."/>
            <person name="Bruce D."/>
            <person name="Goodwin L."/>
            <person name="Pitluck S."/>
            <person name="Munk A.C."/>
            <person name="Brettin T."/>
            <person name="Detter J.C."/>
            <person name="Han C."/>
            <person name="Tapia R."/>
            <person name="Schmutz J."/>
            <person name="Larimer F."/>
            <person name="Land M."/>
            <person name="Hauser L."/>
            <person name="Challacombe J.F."/>
            <person name="Green L."/>
            <person name="Lindler L.E."/>
            <person name="Nikolich M.P."/>
            <person name="Richardson P."/>
        </authorList>
    </citation>
    <scope>NUCLEOTIDE SEQUENCE [LARGE SCALE GENOMIC DNA]</scope>
    <source>
        <strain>YPIII</strain>
    </source>
</reference>
<proteinExistence type="inferred from homology"/>
<accession>B1JQX8</accession>
<dbReference type="EC" id="2.7.7.56" evidence="1"/>
<dbReference type="EMBL" id="CP000950">
    <property type="protein sequence ID" value="ACA70419.1"/>
    <property type="molecule type" value="Genomic_DNA"/>
</dbReference>
<dbReference type="RefSeq" id="WP_002208997.1">
    <property type="nucleotide sequence ID" value="NZ_CP009792.1"/>
</dbReference>
<dbReference type="SMR" id="B1JQX8"/>
<dbReference type="GeneID" id="57974546"/>
<dbReference type="KEGG" id="ypy:YPK_4160"/>
<dbReference type="PATRIC" id="fig|502800.11.peg.511"/>
<dbReference type="GO" id="GO:0000175">
    <property type="term" value="F:3'-5'-RNA exonuclease activity"/>
    <property type="evidence" value="ECO:0007669"/>
    <property type="project" value="UniProtKB-UniRule"/>
</dbReference>
<dbReference type="GO" id="GO:0000049">
    <property type="term" value="F:tRNA binding"/>
    <property type="evidence" value="ECO:0007669"/>
    <property type="project" value="UniProtKB-UniRule"/>
</dbReference>
<dbReference type="GO" id="GO:0009022">
    <property type="term" value="F:tRNA nucleotidyltransferase activity"/>
    <property type="evidence" value="ECO:0007669"/>
    <property type="project" value="UniProtKB-UniRule"/>
</dbReference>
<dbReference type="GO" id="GO:0016075">
    <property type="term" value="P:rRNA catabolic process"/>
    <property type="evidence" value="ECO:0007669"/>
    <property type="project" value="UniProtKB-UniRule"/>
</dbReference>
<dbReference type="GO" id="GO:0006364">
    <property type="term" value="P:rRNA processing"/>
    <property type="evidence" value="ECO:0007669"/>
    <property type="project" value="UniProtKB-KW"/>
</dbReference>
<dbReference type="GO" id="GO:0008033">
    <property type="term" value="P:tRNA processing"/>
    <property type="evidence" value="ECO:0007669"/>
    <property type="project" value="UniProtKB-UniRule"/>
</dbReference>
<dbReference type="CDD" id="cd11362">
    <property type="entry name" value="RNase_PH_bact"/>
    <property type="match status" value="1"/>
</dbReference>
<dbReference type="FunFam" id="3.30.230.70:FF:000003">
    <property type="entry name" value="Ribonuclease PH"/>
    <property type="match status" value="1"/>
</dbReference>
<dbReference type="Gene3D" id="3.30.230.70">
    <property type="entry name" value="GHMP Kinase, N-terminal domain"/>
    <property type="match status" value="1"/>
</dbReference>
<dbReference type="HAMAP" id="MF_00564">
    <property type="entry name" value="RNase_PH"/>
    <property type="match status" value="1"/>
</dbReference>
<dbReference type="InterPro" id="IPR001247">
    <property type="entry name" value="ExoRNase_PH_dom1"/>
</dbReference>
<dbReference type="InterPro" id="IPR015847">
    <property type="entry name" value="ExoRNase_PH_dom2"/>
</dbReference>
<dbReference type="InterPro" id="IPR036345">
    <property type="entry name" value="ExoRNase_PH_dom2_sf"/>
</dbReference>
<dbReference type="InterPro" id="IPR027408">
    <property type="entry name" value="PNPase/RNase_PH_dom_sf"/>
</dbReference>
<dbReference type="InterPro" id="IPR020568">
    <property type="entry name" value="Ribosomal_Su5_D2-typ_SF"/>
</dbReference>
<dbReference type="InterPro" id="IPR050080">
    <property type="entry name" value="RNase_PH"/>
</dbReference>
<dbReference type="InterPro" id="IPR002381">
    <property type="entry name" value="RNase_PH_bac-type"/>
</dbReference>
<dbReference type="InterPro" id="IPR018336">
    <property type="entry name" value="RNase_PH_CS"/>
</dbReference>
<dbReference type="NCBIfam" id="TIGR01966">
    <property type="entry name" value="RNasePH"/>
    <property type="match status" value="1"/>
</dbReference>
<dbReference type="PANTHER" id="PTHR11953">
    <property type="entry name" value="EXOSOME COMPLEX COMPONENT"/>
    <property type="match status" value="1"/>
</dbReference>
<dbReference type="PANTHER" id="PTHR11953:SF0">
    <property type="entry name" value="EXOSOME COMPLEX COMPONENT RRP41"/>
    <property type="match status" value="1"/>
</dbReference>
<dbReference type="Pfam" id="PF01138">
    <property type="entry name" value="RNase_PH"/>
    <property type="match status" value="1"/>
</dbReference>
<dbReference type="Pfam" id="PF03725">
    <property type="entry name" value="RNase_PH_C"/>
    <property type="match status" value="1"/>
</dbReference>
<dbReference type="SUPFAM" id="SSF55666">
    <property type="entry name" value="Ribonuclease PH domain 2-like"/>
    <property type="match status" value="1"/>
</dbReference>
<dbReference type="SUPFAM" id="SSF54211">
    <property type="entry name" value="Ribosomal protein S5 domain 2-like"/>
    <property type="match status" value="1"/>
</dbReference>
<dbReference type="PROSITE" id="PS01277">
    <property type="entry name" value="RIBONUCLEASE_PH"/>
    <property type="match status" value="1"/>
</dbReference>
<comment type="function">
    <text evidence="1">Phosphorolytic 3'-5' exoribonuclease that plays an important role in tRNA 3'-end maturation. Removes nucleotide residues following the 3'-CCA terminus of tRNAs; can also add nucleotides to the ends of RNA molecules by using nucleoside diphosphates as substrates, but this may not be physiologically important. Probably plays a role in initiation of 16S rRNA degradation (leading to ribosome degradation) during starvation.</text>
</comment>
<comment type="catalytic activity">
    <reaction evidence="1">
        <text>tRNA(n+1) + phosphate = tRNA(n) + a ribonucleoside 5'-diphosphate</text>
        <dbReference type="Rhea" id="RHEA:10628"/>
        <dbReference type="Rhea" id="RHEA-COMP:17343"/>
        <dbReference type="Rhea" id="RHEA-COMP:17344"/>
        <dbReference type="ChEBI" id="CHEBI:43474"/>
        <dbReference type="ChEBI" id="CHEBI:57930"/>
        <dbReference type="ChEBI" id="CHEBI:173114"/>
        <dbReference type="EC" id="2.7.7.56"/>
    </reaction>
</comment>
<comment type="subunit">
    <text evidence="1">Homohexameric ring arranged as a trimer of dimers.</text>
</comment>
<comment type="similarity">
    <text evidence="1">Belongs to the RNase PH family.</text>
</comment>
<sequence>MRPADRAAQQVRPLTLTRNYTKHAEGSVLVEFGDTKVLCTATVEEGVPRFLKGQGQGWITAEYGMLPRSTHSRNAREAAKGKQGGRTLEIQRLIARSLRAAVDLKKLGEFTITLDCDVLQADGGTRTASISGACVALADALNKLVASGKLKANPMKGLVAAVSVGIVKGEALCDLEYVEDSAAETDMNVVMMEDGRMIEVQGTAEGEPFSHEELLALLDLARGGIETIFQAQKAALES</sequence>
<name>RNPH_YERPY</name>
<feature type="chain" id="PRO_1000129393" description="Ribonuclease PH">
    <location>
        <begin position="1"/>
        <end position="238"/>
    </location>
</feature>
<feature type="binding site" evidence="1">
    <location>
        <position position="86"/>
    </location>
    <ligand>
        <name>phosphate</name>
        <dbReference type="ChEBI" id="CHEBI:43474"/>
        <note>substrate</note>
    </ligand>
</feature>
<feature type="binding site" evidence="1">
    <location>
        <begin position="124"/>
        <end position="126"/>
    </location>
    <ligand>
        <name>phosphate</name>
        <dbReference type="ChEBI" id="CHEBI:43474"/>
        <note>substrate</note>
    </ligand>
</feature>
<gene>
    <name evidence="1" type="primary">rph</name>
    <name type="ordered locus">YPK_4160</name>
</gene>
<protein>
    <recommendedName>
        <fullName evidence="1">Ribonuclease PH</fullName>
        <shortName evidence="1">RNase PH</shortName>
        <ecNumber evidence="1">2.7.7.56</ecNumber>
    </recommendedName>
    <alternativeName>
        <fullName evidence="1">tRNA nucleotidyltransferase</fullName>
    </alternativeName>
</protein>